<evidence type="ECO:0000255" key="1">
    <source>
        <dbReference type="HAMAP-Rule" id="MF_00359"/>
    </source>
</evidence>
<evidence type="ECO:0000305" key="2"/>
<dbReference type="EMBL" id="BX950229">
    <property type="protein sequence ID" value="CAF30225.1"/>
    <property type="molecule type" value="Genomic_DNA"/>
</dbReference>
<dbReference type="RefSeq" id="WP_011170613.1">
    <property type="nucleotide sequence ID" value="NC_005791.1"/>
</dbReference>
<dbReference type="SMR" id="Q6LZG0"/>
<dbReference type="STRING" id="267377.MMP0669"/>
<dbReference type="EnsemblBacteria" id="CAF30225">
    <property type="protein sequence ID" value="CAF30225"/>
    <property type="gene ID" value="MMP0669"/>
</dbReference>
<dbReference type="GeneID" id="37875200"/>
<dbReference type="KEGG" id="mmp:MMP0669"/>
<dbReference type="PATRIC" id="fig|267377.15.peg.686"/>
<dbReference type="eggNOG" id="arCOG04186">
    <property type="taxonomic scope" value="Archaea"/>
</dbReference>
<dbReference type="HOGENOM" id="CLU_062507_1_0_2"/>
<dbReference type="OrthoDB" id="30639at2157"/>
<dbReference type="Proteomes" id="UP000000590">
    <property type="component" value="Chromosome"/>
</dbReference>
<dbReference type="GO" id="GO:1990904">
    <property type="term" value="C:ribonucleoprotein complex"/>
    <property type="evidence" value="ECO:0007669"/>
    <property type="project" value="UniProtKB-KW"/>
</dbReference>
<dbReference type="GO" id="GO:0005840">
    <property type="term" value="C:ribosome"/>
    <property type="evidence" value="ECO:0007669"/>
    <property type="project" value="UniProtKB-KW"/>
</dbReference>
<dbReference type="GO" id="GO:0003735">
    <property type="term" value="F:structural constituent of ribosome"/>
    <property type="evidence" value="ECO:0007669"/>
    <property type="project" value="InterPro"/>
</dbReference>
<dbReference type="GO" id="GO:0006412">
    <property type="term" value="P:translation"/>
    <property type="evidence" value="ECO:0007669"/>
    <property type="project" value="UniProtKB-UniRule"/>
</dbReference>
<dbReference type="HAMAP" id="MF_00359">
    <property type="entry name" value="Ribosomal_eS1"/>
    <property type="match status" value="1"/>
</dbReference>
<dbReference type="InterPro" id="IPR001593">
    <property type="entry name" value="Ribosomal_eS1"/>
</dbReference>
<dbReference type="InterPro" id="IPR030838">
    <property type="entry name" value="Ribosomal_eS1_arc"/>
</dbReference>
<dbReference type="InterPro" id="IPR018281">
    <property type="entry name" value="Ribosomal_eS1_CS"/>
</dbReference>
<dbReference type="NCBIfam" id="NF003142">
    <property type="entry name" value="PRK04057.1"/>
    <property type="match status" value="1"/>
</dbReference>
<dbReference type="Pfam" id="PF01015">
    <property type="entry name" value="Ribosomal_S3Ae"/>
    <property type="match status" value="1"/>
</dbReference>
<dbReference type="SMART" id="SM01397">
    <property type="entry name" value="Ribosomal_S3Ae"/>
    <property type="match status" value="1"/>
</dbReference>
<dbReference type="PROSITE" id="PS01191">
    <property type="entry name" value="RIBOSOMAL_S3AE"/>
    <property type="match status" value="1"/>
</dbReference>
<gene>
    <name evidence="1" type="primary">rps3ae</name>
    <name type="ordered locus">MMP0669</name>
</gene>
<accession>Q6LZG0</accession>
<protein>
    <recommendedName>
        <fullName evidence="1">Small ribosomal subunit protein eS1</fullName>
    </recommendedName>
    <alternativeName>
        <fullName evidence="2">30S ribosomal protein S3Ae</fullName>
    </alternativeName>
    <alternativeName>
        <fullName evidence="1">Ribosomal protein S1e</fullName>
    </alternativeName>
</protein>
<comment type="similarity">
    <text evidence="1">Belongs to the eukaryotic ribosomal protein eS1 family.</text>
</comment>
<sequence length="225" mass="25432">MARMKARSAKGKRVAKDTWKSKVWYDIYTPQSFGGDVIGQTPANDPANLIGRISEISLRDLTNEHSKHMTRMYFKVDGVSGNNATSQFVGHDTTREYLKSQVRRRRSKINAIVEVRTKDGFKVRVKALVLTAVRARDHHKTEIRVRMEQIIKEMAKETPFAEFVHAMLMGGLGSKIYGDCKKMFPLKRVEIFKSEVIEFGKAAEAPVEEAAAEEVVEEAAAETQE</sequence>
<reference key="1">
    <citation type="journal article" date="2004" name="J. Bacteriol.">
        <title>Complete genome sequence of the genetically tractable hydrogenotrophic methanogen Methanococcus maripaludis.</title>
        <authorList>
            <person name="Hendrickson E.L."/>
            <person name="Kaul R."/>
            <person name="Zhou Y."/>
            <person name="Bovee D."/>
            <person name="Chapman P."/>
            <person name="Chung J."/>
            <person name="Conway de Macario E."/>
            <person name="Dodsworth J.A."/>
            <person name="Gillett W."/>
            <person name="Graham D.E."/>
            <person name="Hackett M."/>
            <person name="Haydock A.K."/>
            <person name="Kang A."/>
            <person name="Land M.L."/>
            <person name="Levy R."/>
            <person name="Lie T.J."/>
            <person name="Major T.A."/>
            <person name="Moore B.C."/>
            <person name="Porat I."/>
            <person name="Palmeiri A."/>
            <person name="Rouse G."/>
            <person name="Saenphimmachak C."/>
            <person name="Soell D."/>
            <person name="Van Dien S."/>
            <person name="Wang T."/>
            <person name="Whitman W.B."/>
            <person name="Xia Q."/>
            <person name="Zhang Y."/>
            <person name="Larimer F.W."/>
            <person name="Olson M.V."/>
            <person name="Leigh J.A."/>
        </authorList>
    </citation>
    <scope>NUCLEOTIDE SEQUENCE [LARGE SCALE GENOMIC DNA]</scope>
    <source>
        <strain>DSM 14266 / JCM 13030 / NBRC 101832 / S2 / LL</strain>
    </source>
</reference>
<keyword id="KW-1185">Reference proteome</keyword>
<keyword id="KW-0687">Ribonucleoprotein</keyword>
<keyword id="KW-0689">Ribosomal protein</keyword>
<name>RS3A_METMP</name>
<organism>
    <name type="scientific">Methanococcus maripaludis (strain DSM 14266 / JCM 13030 / NBRC 101832 / S2 / LL)</name>
    <dbReference type="NCBI Taxonomy" id="267377"/>
    <lineage>
        <taxon>Archaea</taxon>
        <taxon>Methanobacteriati</taxon>
        <taxon>Methanobacteriota</taxon>
        <taxon>Methanomada group</taxon>
        <taxon>Methanococci</taxon>
        <taxon>Methanococcales</taxon>
        <taxon>Methanococcaceae</taxon>
        <taxon>Methanococcus</taxon>
    </lineage>
</organism>
<proteinExistence type="inferred from homology"/>
<feature type="chain" id="PRO_0000153551" description="Small ribosomal subunit protein eS1">
    <location>
        <begin position="1"/>
        <end position="225"/>
    </location>
</feature>